<proteinExistence type="inferred from homology"/>
<sequence>MAKGILGRKIGMTQIFDENGVLIPVTVIDVEGNVVLQQKTVEVDGYQATQVGFESKREKLSNKPELGHVKKANTAPKRFVKEIRFDALNNELLALEVGTEIKADLFTAGEDVDVTGTSKGKGFQGNIKRHNQSRGPMTHGSRYHRGVGSLGAIKGNMKGKNLPGQMGNEQVTVQNLKIVAVDTENDLLLVSGSVPGPRKGYVVVRSAIKKGN</sequence>
<accession>A9NED3</accession>
<name>RL3_ACHLI</name>
<keyword id="KW-1185">Reference proteome</keyword>
<keyword id="KW-0687">Ribonucleoprotein</keyword>
<keyword id="KW-0689">Ribosomal protein</keyword>
<keyword id="KW-0694">RNA-binding</keyword>
<keyword id="KW-0699">rRNA-binding</keyword>
<evidence type="ECO:0000255" key="1">
    <source>
        <dbReference type="HAMAP-Rule" id="MF_01325"/>
    </source>
</evidence>
<evidence type="ECO:0000256" key="2">
    <source>
        <dbReference type="SAM" id="MobiDB-lite"/>
    </source>
</evidence>
<evidence type="ECO:0000305" key="3"/>
<reference key="1">
    <citation type="journal article" date="2011" name="J. Bacteriol.">
        <title>Complete genome and proteome of Acholeplasma laidlawii.</title>
        <authorList>
            <person name="Lazarev V.N."/>
            <person name="Levitskii S.A."/>
            <person name="Basovskii Y.I."/>
            <person name="Chukin M.M."/>
            <person name="Akopian T.A."/>
            <person name="Vereshchagin V.V."/>
            <person name="Kostrjukova E.S."/>
            <person name="Kovaleva G.Y."/>
            <person name="Kazanov M.D."/>
            <person name="Malko D.B."/>
            <person name="Vitreschak A.G."/>
            <person name="Sernova N.V."/>
            <person name="Gelfand M.S."/>
            <person name="Demina I.A."/>
            <person name="Serebryakova M.V."/>
            <person name="Galyamina M.A."/>
            <person name="Vtyurin N.N."/>
            <person name="Rogov S.I."/>
            <person name="Alexeev D.G."/>
            <person name="Ladygina V.G."/>
            <person name="Govorun V.M."/>
        </authorList>
    </citation>
    <scope>NUCLEOTIDE SEQUENCE [LARGE SCALE GENOMIC DNA]</scope>
    <source>
        <strain>PG-8A</strain>
    </source>
</reference>
<dbReference type="EMBL" id="CP000896">
    <property type="protein sequence ID" value="ABX80713.1"/>
    <property type="molecule type" value="Genomic_DNA"/>
</dbReference>
<dbReference type="RefSeq" id="WP_012242044.1">
    <property type="nucleotide sequence ID" value="NC_010163.1"/>
</dbReference>
<dbReference type="SMR" id="A9NED3"/>
<dbReference type="STRING" id="441768.ACL_0087"/>
<dbReference type="GeneID" id="41338289"/>
<dbReference type="KEGG" id="acl:ACL_0087"/>
<dbReference type="eggNOG" id="COG0087">
    <property type="taxonomic scope" value="Bacteria"/>
</dbReference>
<dbReference type="HOGENOM" id="CLU_044142_4_1_14"/>
<dbReference type="OrthoDB" id="9806135at2"/>
<dbReference type="Proteomes" id="UP000008558">
    <property type="component" value="Chromosome"/>
</dbReference>
<dbReference type="GO" id="GO:0022625">
    <property type="term" value="C:cytosolic large ribosomal subunit"/>
    <property type="evidence" value="ECO:0007669"/>
    <property type="project" value="TreeGrafter"/>
</dbReference>
<dbReference type="GO" id="GO:0019843">
    <property type="term" value="F:rRNA binding"/>
    <property type="evidence" value="ECO:0007669"/>
    <property type="project" value="UniProtKB-UniRule"/>
</dbReference>
<dbReference type="GO" id="GO:0003735">
    <property type="term" value="F:structural constituent of ribosome"/>
    <property type="evidence" value="ECO:0007669"/>
    <property type="project" value="InterPro"/>
</dbReference>
<dbReference type="GO" id="GO:0006412">
    <property type="term" value="P:translation"/>
    <property type="evidence" value="ECO:0007669"/>
    <property type="project" value="UniProtKB-UniRule"/>
</dbReference>
<dbReference type="FunFam" id="2.40.30.10:FF:000004">
    <property type="entry name" value="50S ribosomal protein L3"/>
    <property type="match status" value="1"/>
</dbReference>
<dbReference type="FunFam" id="3.30.160.810:FF:000002">
    <property type="entry name" value="50S ribosomal protein L3"/>
    <property type="match status" value="1"/>
</dbReference>
<dbReference type="Gene3D" id="3.30.160.810">
    <property type="match status" value="1"/>
</dbReference>
<dbReference type="Gene3D" id="2.40.30.10">
    <property type="entry name" value="Translation factors"/>
    <property type="match status" value="1"/>
</dbReference>
<dbReference type="HAMAP" id="MF_01325_B">
    <property type="entry name" value="Ribosomal_uL3_B"/>
    <property type="match status" value="1"/>
</dbReference>
<dbReference type="InterPro" id="IPR000597">
    <property type="entry name" value="Ribosomal_uL3"/>
</dbReference>
<dbReference type="InterPro" id="IPR019927">
    <property type="entry name" value="Ribosomal_uL3_bac/org-type"/>
</dbReference>
<dbReference type="InterPro" id="IPR019926">
    <property type="entry name" value="Ribosomal_uL3_CS"/>
</dbReference>
<dbReference type="InterPro" id="IPR009000">
    <property type="entry name" value="Transl_B-barrel_sf"/>
</dbReference>
<dbReference type="NCBIfam" id="TIGR03625">
    <property type="entry name" value="L3_bact"/>
    <property type="match status" value="1"/>
</dbReference>
<dbReference type="PANTHER" id="PTHR11229">
    <property type="entry name" value="50S RIBOSOMAL PROTEIN L3"/>
    <property type="match status" value="1"/>
</dbReference>
<dbReference type="PANTHER" id="PTHR11229:SF16">
    <property type="entry name" value="LARGE RIBOSOMAL SUBUNIT PROTEIN UL3C"/>
    <property type="match status" value="1"/>
</dbReference>
<dbReference type="Pfam" id="PF00297">
    <property type="entry name" value="Ribosomal_L3"/>
    <property type="match status" value="1"/>
</dbReference>
<dbReference type="SUPFAM" id="SSF50447">
    <property type="entry name" value="Translation proteins"/>
    <property type="match status" value="1"/>
</dbReference>
<dbReference type="PROSITE" id="PS00474">
    <property type="entry name" value="RIBOSOMAL_L3"/>
    <property type="match status" value="1"/>
</dbReference>
<gene>
    <name evidence="1" type="primary">rplC</name>
    <name type="ordered locus">ACL_0087</name>
</gene>
<protein>
    <recommendedName>
        <fullName evidence="1">Large ribosomal subunit protein uL3</fullName>
    </recommendedName>
    <alternativeName>
        <fullName evidence="3">50S ribosomal protein L3</fullName>
    </alternativeName>
</protein>
<comment type="function">
    <text evidence="1">One of the primary rRNA binding proteins, it binds directly near the 3'-end of the 23S rRNA, where it nucleates assembly of the 50S subunit.</text>
</comment>
<comment type="subunit">
    <text evidence="1">Part of the 50S ribosomal subunit. Forms a cluster with proteins L14 and L19.</text>
</comment>
<comment type="similarity">
    <text evidence="1">Belongs to the universal ribosomal protein uL3 family.</text>
</comment>
<organism>
    <name type="scientific">Acholeplasma laidlawii (strain PG-8A)</name>
    <dbReference type="NCBI Taxonomy" id="441768"/>
    <lineage>
        <taxon>Bacteria</taxon>
        <taxon>Bacillati</taxon>
        <taxon>Mycoplasmatota</taxon>
        <taxon>Mollicutes</taxon>
        <taxon>Acholeplasmatales</taxon>
        <taxon>Acholeplasmataceae</taxon>
        <taxon>Acholeplasma</taxon>
    </lineage>
</organism>
<feature type="chain" id="PRO_1000086423" description="Large ribosomal subunit protein uL3">
    <location>
        <begin position="1"/>
        <end position="212"/>
    </location>
</feature>
<feature type="region of interest" description="Disordered" evidence="2">
    <location>
        <begin position="117"/>
        <end position="142"/>
    </location>
</feature>